<evidence type="ECO:0000250" key="1"/>
<evidence type="ECO:0000250" key="2">
    <source>
        <dbReference type="UniProtKB" id="Q9S7P8"/>
    </source>
</evidence>
<evidence type="ECO:0000256" key="3">
    <source>
        <dbReference type="SAM" id="MobiDB-lite"/>
    </source>
</evidence>
<evidence type="ECO:0000269" key="4">
    <source>
    </source>
</evidence>
<evidence type="ECO:0000305" key="5"/>
<proteinExistence type="evidence at transcript level"/>
<dbReference type="EMBL" id="AL031326">
    <property type="status" value="NOT_ANNOTATED_CDS"/>
    <property type="molecule type" value="Genomic_DNA"/>
</dbReference>
<dbReference type="EMBL" id="AL161559">
    <property type="status" value="NOT_ANNOTATED_CDS"/>
    <property type="molecule type" value="Genomic_DNA"/>
</dbReference>
<dbReference type="EMBL" id="CP002687">
    <property type="protein sequence ID" value="AEE84767.1"/>
    <property type="molecule type" value="Genomic_DNA"/>
</dbReference>
<dbReference type="EMBL" id="BT003955">
    <property type="protein sequence ID" value="AAO42000.1"/>
    <property type="molecule type" value="mRNA"/>
</dbReference>
<dbReference type="EMBL" id="BT005054">
    <property type="protein sequence ID" value="AAO50587.1"/>
    <property type="molecule type" value="mRNA"/>
</dbReference>
<dbReference type="EMBL" id="AY084337">
    <property type="protein sequence ID" value="AAM60920.1"/>
    <property type="molecule type" value="mRNA"/>
</dbReference>
<dbReference type="RefSeq" id="NP_567685.1">
    <property type="nucleotide sequence ID" value="NM_118480.4"/>
</dbReference>
<dbReference type="FunCoup" id="Q8LGD1">
    <property type="interactions" value="42"/>
</dbReference>
<dbReference type="STRING" id="3702.Q8LGD1"/>
<dbReference type="PaxDb" id="3702-AT4G23496.1"/>
<dbReference type="ProteomicsDB" id="232614"/>
<dbReference type="EnsemblPlants" id="AT4G23496.1">
    <property type="protein sequence ID" value="AT4G23496.1"/>
    <property type="gene ID" value="AT4G23496"/>
</dbReference>
<dbReference type="GeneID" id="828449"/>
<dbReference type="Gramene" id="AT4G23496.1">
    <property type="protein sequence ID" value="AT4G23496.1"/>
    <property type="gene ID" value="AT4G23496"/>
</dbReference>
<dbReference type="KEGG" id="ath:AT4G23496"/>
<dbReference type="Araport" id="AT4G23496"/>
<dbReference type="TAIR" id="AT4G23496">
    <property type="gene designation" value="SP1L5"/>
</dbReference>
<dbReference type="eggNOG" id="ENOG502S5PX">
    <property type="taxonomic scope" value="Eukaryota"/>
</dbReference>
<dbReference type="HOGENOM" id="CLU_129558_1_0_1"/>
<dbReference type="InParanoid" id="Q8LGD1"/>
<dbReference type="OMA" id="RIWGEAM"/>
<dbReference type="OrthoDB" id="62622at2759"/>
<dbReference type="PhylomeDB" id="Q8LGD1"/>
<dbReference type="PRO" id="PR:Q8LGD1"/>
<dbReference type="Proteomes" id="UP000006548">
    <property type="component" value="Chromosome 4"/>
</dbReference>
<dbReference type="ExpressionAtlas" id="Q8LGD1">
    <property type="expression patterns" value="baseline and differential"/>
</dbReference>
<dbReference type="GO" id="GO:0005874">
    <property type="term" value="C:microtubule"/>
    <property type="evidence" value="ECO:0007669"/>
    <property type="project" value="UniProtKB-KW"/>
</dbReference>
<dbReference type="GO" id="GO:0043622">
    <property type="term" value="P:cortical microtubule organization"/>
    <property type="evidence" value="ECO:0007669"/>
    <property type="project" value="InterPro"/>
</dbReference>
<dbReference type="InterPro" id="IPR039613">
    <property type="entry name" value="SPR1/2/3/4/5"/>
</dbReference>
<dbReference type="PANTHER" id="PTHR33403:SF19">
    <property type="entry name" value="PROTEIN SPIRAL1-LIKE 5"/>
    <property type="match status" value="1"/>
</dbReference>
<dbReference type="PANTHER" id="PTHR33403">
    <property type="entry name" value="SPR1"/>
    <property type="match status" value="1"/>
</dbReference>
<sequence>MSRGGSFGGGQSSLGYLFGSDNEIPKTPAPPVAPKPAPPYGVDSTEEDHEADQKPKISNNNYQRVQGQNSGNFVTDRPTTKVKSVPGGGSSLGYLFGDK</sequence>
<gene>
    <name type="primary">SP1L5</name>
    <name type="ordered locus">At4g23496</name>
    <name type="ORF">F16G20</name>
</gene>
<organism>
    <name type="scientific">Arabidopsis thaliana</name>
    <name type="common">Mouse-ear cress</name>
    <dbReference type="NCBI Taxonomy" id="3702"/>
    <lineage>
        <taxon>Eukaryota</taxon>
        <taxon>Viridiplantae</taxon>
        <taxon>Streptophyta</taxon>
        <taxon>Embryophyta</taxon>
        <taxon>Tracheophyta</taxon>
        <taxon>Spermatophyta</taxon>
        <taxon>Magnoliopsida</taxon>
        <taxon>eudicotyledons</taxon>
        <taxon>Gunneridae</taxon>
        <taxon>Pentapetalae</taxon>
        <taxon>rosids</taxon>
        <taxon>malvids</taxon>
        <taxon>Brassicales</taxon>
        <taxon>Brassicaceae</taxon>
        <taxon>Camelineae</taxon>
        <taxon>Arabidopsis</taxon>
    </lineage>
</organism>
<reference key="1">
    <citation type="journal article" date="1999" name="Nature">
        <title>Sequence and analysis of chromosome 4 of the plant Arabidopsis thaliana.</title>
        <authorList>
            <person name="Mayer K.F.X."/>
            <person name="Schueller C."/>
            <person name="Wambutt R."/>
            <person name="Murphy G."/>
            <person name="Volckaert G."/>
            <person name="Pohl T."/>
            <person name="Duesterhoeft A."/>
            <person name="Stiekema W."/>
            <person name="Entian K.-D."/>
            <person name="Terryn N."/>
            <person name="Harris B."/>
            <person name="Ansorge W."/>
            <person name="Brandt P."/>
            <person name="Grivell L.A."/>
            <person name="Rieger M."/>
            <person name="Weichselgartner M."/>
            <person name="de Simone V."/>
            <person name="Obermaier B."/>
            <person name="Mache R."/>
            <person name="Mueller M."/>
            <person name="Kreis M."/>
            <person name="Delseny M."/>
            <person name="Puigdomenech P."/>
            <person name="Watson M."/>
            <person name="Schmidtheini T."/>
            <person name="Reichert B."/>
            <person name="Portetelle D."/>
            <person name="Perez-Alonso M."/>
            <person name="Boutry M."/>
            <person name="Bancroft I."/>
            <person name="Vos P."/>
            <person name="Hoheisel J."/>
            <person name="Zimmermann W."/>
            <person name="Wedler H."/>
            <person name="Ridley P."/>
            <person name="Langham S.-A."/>
            <person name="McCullagh B."/>
            <person name="Bilham L."/>
            <person name="Robben J."/>
            <person name="van der Schueren J."/>
            <person name="Grymonprez B."/>
            <person name="Chuang Y.-J."/>
            <person name="Vandenbussche F."/>
            <person name="Braeken M."/>
            <person name="Weltjens I."/>
            <person name="Voet M."/>
            <person name="Bastiaens I."/>
            <person name="Aert R."/>
            <person name="Defoor E."/>
            <person name="Weitzenegger T."/>
            <person name="Bothe G."/>
            <person name="Ramsperger U."/>
            <person name="Hilbert H."/>
            <person name="Braun M."/>
            <person name="Holzer E."/>
            <person name="Brandt A."/>
            <person name="Peters S."/>
            <person name="van Staveren M."/>
            <person name="Dirkse W."/>
            <person name="Mooijman P."/>
            <person name="Klein Lankhorst R."/>
            <person name="Rose M."/>
            <person name="Hauf J."/>
            <person name="Koetter P."/>
            <person name="Berneiser S."/>
            <person name="Hempel S."/>
            <person name="Feldpausch M."/>
            <person name="Lamberth S."/>
            <person name="Van den Daele H."/>
            <person name="De Keyser A."/>
            <person name="Buysshaert C."/>
            <person name="Gielen J."/>
            <person name="Villarroel R."/>
            <person name="De Clercq R."/>
            <person name="van Montagu M."/>
            <person name="Rogers J."/>
            <person name="Cronin A."/>
            <person name="Quail M.A."/>
            <person name="Bray-Allen S."/>
            <person name="Clark L."/>
            <person name="Doggett J."/>
            <person name="Hall S."/>
            <person name="Kay M."/>
            <person name="Lennard N."/>
            <person name="McLay K."/>
            <person name="Mayes R."/>
            <person name="Pettett A."/>
            <person name="Rajandream M.A."/>
            <person name="Lyne M."/>
            <person name="Benes V."/>
            <person name="Rechmann S."/>
            <person name="Borkova D."/>
            <person name="Bloecker H."/>
            <person name="Scharfe M."/>
            <person name="Grimm M."/>
            <person name="Loehnert T.-H."/>
            <person name="Dose S."/>
            <person name="de Haan M."/>
            <person name="Maarse A.C."/>
            <person name="Schaefer M."/>
            <person name="Mueller-Auer S."/>
            <person name="Gabel C."/>
            <person name="Fuchs M."/>
            <person name="Fartmann B."/>
            <person name="Granderath K."/>
            <person name="Dauner D."/>
            <person name="Herzl A."/>
            <person name="Neumann S."/>
            <person name="Argiriou A."/>
            <person name="Vitale D."/>
            <person name="Liguori R."/>
            <person name="Piravandi E."/>
            <person name="Massenet O."/>
            <person name="Quigley F."/>
            <person name="Clabauld G."/>
            <person name="Muendlein A."/>
            <person name="Felber R."/>
            <person name="Schnabl S."/>
            <person name="Hiller R."/>
            <person name="Schmidt W."/>
            <person name="Lecharny A."/>
            <person name="Aubourg S."/>
            <person name="Chefdor F."/>
            <person name="Cooke R."/>
            <person name="Berger C."/>
            <person name="Monfort A."/>
            <person name="Casacuberta E."/>
            <person name="Gibbons T."/>
            <person name="Weber N."/>
            <person name="Vandenbol M."/>
            <person name="Bargues M."/>
            <person name="Terol J."/>
            <person name="Torres A."/>
            <person name="Perez-Perez A."/>
            <person name="Purnelle B."/>
            <person name="Bent E."/>
            <person name="Johnson S."/>
            <person name="Tacon D."/>
            <person name="Jesse T."/>
            <person name="Heijnen L."/>
            <person name="Schwarz S."/>
            <person name="Scholler P."/>
            <person name="Heber S."/>
            <person name="Francs P."/>
            <person name="Bielke C."/>
            <person name="Frishman D."/>
            <person name="Haase D."/>
            <person name="Lemcke K."/>
            <person name="Mewes H.-W."/>
            <person name="Stocker S."/>
            <person name="Zaccaria P."/>
            <person name="Bevan M."/>
            <person name="Wilson R.K."/>
            <person name="de la Bastide M."/>
            <person name="Habermann K."/>
            <person name="Parnell L."/>
            <person name="Dedhia N."/>
            <person name="Gnoj L."/>
            <person name="Schutz K."/>
            <person name="Huang E."/>
            <person name="Spiegel L."/>
            <person name="Sekhon M."/>
            <person name="Murray J."/>
            <person name="Sheet P."/>
            <person name="Cordes M."/>
            <person name="Abu-Threideh J."/>
            <person name="Stoneking T."/>
            <person name="Kalicki J."/>
            <person name="Graves T."/>
            <person name="Harmon G."/>
            <person name="Edwards J."/>
            <person name="Latreille P."/>
            <person name="Courtney L."/>
            <person name="Cloud J."/>
            <person name="Abbott A."/>
            <person name="Scott K."/>
            <person name="Johnson D."/>
            <person name="Minx P."/>
            <person name="Bentley D."/>
            <person name="Fulton B."/>
            <person name="Miller N."/>
            <person name="Greco T."/>
            <person name="Kemp K."/>
            <person name="Kramer J."/>
            <person name="Fulton L."/>
            <person name="Mardis E."/>
            <person name="Dante M."/>
            <person name="Pepin K."/>
            <person name="Hillier L.W."/>
            <person name="Nelson J."/>
            <person name="Spieth J."/>
            <person name="Ryan E."/>
            <person name="Andrews S."/>
            <person name="Geisel C."/>
            <person name="Layman D."/>
            <person name="Du H."/>
            <person name="Ali J."/>
            <person name="Berghoff A."/>
            <person name="Jones K."/>
            <person name="Drone K."/>
            <person name="Cotton M."/>
            <person name="Joshu C."/>
            <person name="Antonoiu B."/>
            <person name="Zidanic M."/>
            <person name="Strong C."/>
            <person name="Sun H."/>
            <person name="Lamar B."/>
            <person name="Yordan C."/>
            <person name="Ma P."/>
            <person name="Zhong J."/>
            <person name="Preston R."/>
            <person name="Vil D."/>
            <person name="Shekher M."/>
            <person name="Matero A."/>
            <person name="Shah R."/>
            <person name="Swaby I.K."/>
            <person name="O'Shaughnessy A."/>
            <person name="Rodriguez M."/>
            <person name="Hoffman J."/>
            <person name="Till S."/>
            <person name="Granat S."/>
            <person name="Shohdy N."/>
            <person name="Hasegawa A."/>
            <person name="Hameed A."/>
            <person name="Lodhi M."/>
            <person name="Johnson A."/>
            <person name="Chen E."/>
            <person name="Marra M.A."/>
            <person name="Martienssen R."/>
            <person name="McCombie W.R."/>
        </authorList>
    </citation>
    <scope>NUCLEOTIDE SEQUENCE [LARGE SCALE GENOMIC DNA]</scope>
    <source>
        <strain>cv. Columbia</strain>
    </source>
</reference>
<reference key="2">
    <citation type="journal article" date="2017" name="Plant J.">
        <title>Araport11: a complete reannotation of the Arabidopsis thaliana reference genome.</title>
        <authorList>
            <person name="Cheng C.Y."/>
            <person name="Krishnakumar V."/>
            <person name="Chan A.P."/>
            <person name="Thibaud-Nissen F."/>
            <person name="Schobel S."/>
            <person name="Town C.D."/>
        </authorList>
    </citation>
    <scope>GENOME REANNOTATION</scope>
    <source>
        <strain>cv. Columbia</strain>
    </source>
</reference>
<reference key="3">
    <citation type="journal article" date="2003" name="Science">
        <title>Empirical analysis of transcriptional activity in the Arabidopsis genome.</title>
        <authorList>
            <person name="Yamada K."/>
            <person name="Lim J."/>
            <person name="Dale J.M."/>
            <person name="Chen H."/>
            <person name="Shinn P."/>
            <person name="Palm C.J."/>
            <person name="Southwick A.M."/>
            <person name="Wu H.C."/>
            <person name="Kim C.J."/>
            <person name="Nguyen M."/>
            <person name="Pham P.K."/>
            <person name="Cheuk R.F."/>
            <person name="Karlin-Newmann G."/>
            <person name="Liu S.X."/>
            <person name="Lam B."/>
            <person name="Sakano H."/>
            <person name="Wu T."/>
            <person name="Yu G."/>
            <person name="Miranda M."/>
            <person name="Quach H.L."/>
            <person name="Tripp M."/>
            <person name="Chang C.H."/>
            <person name="Lee J.M."/>
            <person name="Toriumi M.J."/>
            <person name="Chan M.M."/>
            <person name="Tang C.C."/>
            <person name="Onodera C.S."/>
            <person name="Deng J.M."/>
            <person name="Akiyama K."/>
            <person name="Ansari Y."/>
            <person name="Arakawa T."/>
            <person name="Banh J."/>
            <person name="Banno F."/>
            <person name="Bowser L."/>
            <person name="Brooks S.Y."/>
            <person name="Carninci P."/>
            <person name="Chao Q."/>
            <person name="Choy N."/>
            <person name="Enju A."/>
            <person name="Goldsmith A.D."/>
            <person name="Gurjal M."/>
            <person name="Hansen N.F."/>
            <person name="Hayashizaki Y."/>
            <person name="Johnson-Hopson C."/>
            <person name="Hsuan V.W."/>
            <person name="Iida K."/>
            <person name="Karnes M."/>
            <person name="Khan S."/>
            <person name="Koesema E."/>
            <person name="Ishida J."/>
            <person name="Jiang P.X."/>
            <person name="Jones T."/>
            <person name="Kawai J."/>
            <person name="Kamiya A."/>
            <person name="Meyers C."/>
            <person name="Nakajima M."/>
            <person name="Narusaka M."/>
            <person name="Seki M."/>
            <person name="Sakurai T."/>
            <person name="Satou M."/>
            <person name="Tamse R."/>
            <person name="Vaysberg M."/>
            <person name="Wallender E.K."/>
            <person name="Wong C."/>
            <person name="Yamamura Y."/>
            <person name="Yuan S."/>
            <person name="Shinozaki K."/>
            <person name="Davis R.W."/>
            <person name="Theologis A."/>
            <person name="Ecker J.R."/>
        </authorList>
    </citation>
    <scope>NUCLEOTIDE SEQUENCE [LARGE SCALE MRNA]</scope>
    <source>
        <strain>cv. Columbia</strain>
    </source>
</reference>
<reference key="4">
    <citation type="submission" date="2002-03" db="EMBL/GenBank/DDBJ databases">
        <title>Full-length cDNA from Arabidopsis thaliana.</title>
        <authorList>
            <person name="Brover V.V."/>
            <person name="Troukhan M.E."/>
            <person name="Alexandrov N.A."/>
            <person name="Lu Y.-P."/>
            <person name="Flavell R.B."/>
            <person name="Feldmann K.A."/>
        </authorList>
    </citation>
    <scope>NUCLEOTIDE SEQUENCE [LARGE SCALE MRNA]</scope>
</reference>
<reference key="5">
    <citation type="book" date="2002" name="Proceedings of the 13th international conference on Arabidopsis research">
        <title>Functional analysis of SPIRAL1-LIKE genes.</title>
        <authorList>
            <person name="Nakajima K."/>
            <person name="Kawamura T."/>
            <person name="Furutani I."/>
            <person name="Hashimoto T."/>
        </authorList>
    </citation>
    <scope>GENE FAMILY</scope>
</reference>
<reference key="6">
    <citation type="journal article" date="2006" name="Plant Cell Physiol.">
        <title>Role of the SPIRAL1 gene family in anisotropic growth of Arabidopsis thaliana.</title>
        <authorList>
            <person name="Nakajima K."/>
            <person name="Kawamura T."/>
            <person name="Hashimoto T."/>
        </authorList>
    </citation>
    <scope>TISSUE SPECIFICITY</scope>
    <scope>GENE FAMILY</scope>
</reference>
<comment type="function">
    <text evidence="1">Acts redundantly with SPR1 in maintaining the cortical microtubules organization essential for anisotropic cell growth.</text>
</comment>
<comment type="tissue specificity">
    <text evidence="4">Expressed exclusively in stems and flowers.</text>
</comment>
<comment type="similarity">
    <text evidence="5">Belongs to the SPIRAL1 family.</text>
</comment>
<accession>Q8LGD1</accession>
<name>SP1L5_ARATH</name>
<feature type="chain" id="PRO_0000417957" description="Protein SPIRAL1-like 5">
    <location>
        <begin position="1"/>
        <end position="99"/>
    </location>
</feature>
<feature type="region of interest" description="Disordered" evidence="3">
    <location>
        <begin position="1"/>
        <end position="99"/>
    </location>
</feature>
<feature type="compositionally biased region" description="Gly residues" evidence="3">
    <location>
        <begin position="1"/>
        <end position="12"/>
    </location>
</feature>
<feature type="compositionally biased region" description="Pro residues" evidence="3">
    <location>
        <begin position="27"/>
        <end position="39"/>
    </location>
</feature>
<feature type="compositionally biased region" description="Polar residues" evidence="3">
    <location>
        <begin position="56"/>
        <end position="73"/>
    </location>
</feature>
<feature type="modified residue" description="Phosphoserine" evidence="2">
    <location>
        <position position="58"/>
    </location>
</feature>
<keyword id="KW-0493">Microtubule</keyword>
<keyword id="KW-0597">Phosphoprotein</keyword>
<keyword id="KW-1185">Reference proteome</keyword>
<protein>
    <recommendedName>
        <fullName>Protein SPIRAL1-like 5</fullName>
    </recommendedName>
</protein>